<proteinExistence type="inferred from homology"/>
<comment type="function">
    <text evidence="1">Catalyzes the ATP-dependent phosphorylation of N-acetyl-L-glutamate.</text>
</comment>
<comment type="catalytic activity">
    <reaction evidence="1">
        <text>N-acetyl-L-glutamate + ATP = N-acetyl-L-glutamyl 5-phosphate + ADP</text>
        <dbReference type="Rhea" id="RHEA:14629"/>
        <dbReference type="ChEBI" id="CHEBI:30616"/>
        <dbReference type="ChEBI" id="CHEBI:44337"/>
        <dbReference type="ChEBI" id="CHEBI:57936"/>
        <dbReference type="ChEBI" id="CHEBI:456216"/>
        <dbReference type="EC" id="2.7.2.8"/>
    </reaction>
</comment>
<comment type="pathway">
    <text evidence="1">Amino-acid biosynthesis; L-arginine biosynthesis; N(2)-acetyl-L-ornithine from L-glutamate: step 2/4.</text>
</comment>
<comment type="subcellular location">
    <subcellularLocation>
        <location evidence="1">Cytoplasm</location>
    </subcellularLocation>
</comment>
<comment type="similarity">
    <text evidence="1">Belongs to the acetylglutamate kinase family. ArgB subfamily.</text>
</comment>
<keyword id="KW-0028">Amino-acid biosynthesis</keyword>
<keyword id="KW-0055">Arginine biosynthesis</keyword>
<keyword id="KW-0067">ATP-binding</keyword>
<keyword id="KW-0963">Cytoplasm</keyword>
<keyword id="KW-0418">Kinase</keyword>
<keyword id="KW-0547">Nucleotide-binding</keyword>
<keyword id="KW-1185">Reference proteome</keyword>
<keyword id="KW-0808">Transferase</keyword>
<reference key="1">
    <citation type="journal article" date="2010" name="Stand. Genomic Sci.">
        <title>Complete genome sequence of Rhizobium leguminosarum bv trifolii strain WSM2304, an effective microsymbiont of the South American clover Trifolium polymorphum.</title>
        <authorList>
            <person name="Reeve W."/>
            <person name="O'Hara G."/>
            <person name="Chain P."/>
            <person name="Ardley J."/>
            <person name="Brau L."/>
            <person name="Nandesena K."/>
            <person name="Tiwari R."/>
            <person name="Malfatti S."/>
            <person name="Kiss H."/>
            <person name="Lapidus A."/>
            <person name="Copeland A."/>
            <person name="Nolan M."/>
            <person name="Land M."/>
            <person name="Ivanova N."/>
            <person name="Mavromatis K."/>
            <person name="Markowitz V."/>
            <person name="Kyrpides N."/>
            <person name="Melino V."/>
            <person name="Denton M."/>
            <person name="Yates R."/>
            <person name="Howieson J."/>
        </authorList>
    </citation>
    <scope>NUCLEOTIDE SEQUENCE [LARGE SCALE GENOMIC DNA]</scope>
    <source>
        <strain>WSM2304</strain>
    </source>
</reference>
<protein>
    <recommendedName>
        <fullName evidence="1">Acetylglutamate kinase</fullName>
        <ecNumber evidence="1">2.7.2.8</ecNumber>
    </recommendedName>
    <alternativeName>
        <fullName evidence="1">N-acetyl-L-glutamate 5-phosphotransferase</fullName>
    </alternativeName>
    <alternativeName>
        <fullName evidence="1">NAG kinase</fullName>
        <shortName evidence="1">NAGK</shortName>
    </alternativeName>
</protein>
<gene>
    <name evidence="1" type="primary">argB</name>
    <name type="ordered locus">Rleg2_0071</name>
</gene>
<organism>
    <name type="scientific">Rhizobium leguminosarum bv. trifolii (strain WSM2304)</name>
    <dbReference type="NCBI Taxonomy" id="395492"/>
    <lineage>
        <taxon>Bacteria</taxon>
        <taxon>Pseudomonadati</taxon>
        <taxon>Pseudomonadota</taxon>
        <taxon>Alphaproteobacteria</taxon>
        <taxon>Hyphomicrobiales</taxon>
        <taxon>Rhizobiaceae</taxon>
        <taxon>Rhizobium/Agrobacterium group</taxon>
        <taxon>Rhizobium</taxon>
    </lineage>
</organism>
<evidence type="ECO:0000255" key="1">
    <source>
        <dbReference type="HAMAP-Rule" id="MF_00082"/>
    </source>
</evidence>
<name>ARGB_RHILW</name>
<accession>B5ZN33</accession>
<feature type="chain" id="PRO_1000092875" description="Acetylglutamate kinase">
    <location>
        <begin position="1"/>
        <end position="295"/>
    </location>
</feature>
<feature type="binding site" evidence="1">
    <location>
        <begin position="66"/>
        <end position="67"/>
    </location>
    <ligand>
        <name>substrate</name>
    </ligand>
</feature>
<feature type="binding site" evidence="1">
    <location>
        <position position="88"/>
    </location>
    <ligand>
        <name>substrate</name>
    </ligand>
</feature>
<feature type="binding site" evidence="1">
    <location>
        <position position="193"/>
    </location>
    <ligand>
        <name>substrate</name>
    </ligand>
</feature>
<feature type="site" description="Transition state stabilizer" evidence="1">
    <location>
        <position position="31"/>
    </location>
</feature>
<feature type="site" description="Transition state stabilizer" evidence="1">
    <location>
        <position position="253"/>
    </location>
</feature>
<sequence length="295" mass="31133">MNESESELQARLLAKALPFMQRYENKTIVVKYGGHAMGNPELGKAFASDIALLKQSGVNPIVVHGGGPQIGAMLNKMGIESKFEGGLRVTDQKTVEIVEMVLAGSINKEIVALINQTGEWAIGLCGKDGNMVFAEKARKTVKDPDSNIERVLDLGFVGEVVEVDRTLLDLLARSEMIPVIAPVAPGRDGATYNINADTFAGAIAGALNATRLLFLTDVAGVLDKNGQLIKELSVAEAHALIADGTISGGMIPKVETCIDAIKAGVQGVVILNGKTAHSVLLEIFTEHGIGTLIVP</sequence>
<dbReference type="EC" id="2.7.2.8" evidence="1"/>
<dbReference type="EMBL" id="CP001191">
    <property type="protein sequence ID" value="ACI53374.1"/>
    <property type="molecule type" value="Genomic_DNA"/>
</dbReference>
<dbReference type="RefSeq" id="WP_003570750.1">
    <property type="nucleotide sequence ID" value="NC_011369.1"/>
</dbReference>
<dbReference type="SMR" id="B5ZN33"/>
<dbReference type="STRING" id="395492.Rleg2_0071"/>
<dbReference type="KEGG" id="rlt:Rleg2_0071"/>
<dbReference type="eggNOG" id="COG0548">
    <property type="taxonomic scope" value="Bacteria"/>
</dbReference>
<dbReference type="HOGENOM" id="CLU_053680_0_0_5"/>
<dbReference type="UniPathway" id="UPA00068">
    <property type="reaction ID" value="UER00107"/>
</dbReference>
<dbReference type="Proteomes" id="UP000008330">
    <property type="component" value="Chromosome"/>
</dbReference>
<dbReference type="GO" id="GO:0005737">
    <property type="term" value="C:cytoplasm"/>
    <property type="evidence" value="ECO:0007669"/>
    <property type="project" value="UniProtKB-SubCell"/>
</dbReference>
<dbReference type="GO" id="GO:0003991">
    <property type="term" value="F:acetylglutamate kinase activity"/>
    <property type="evidence" value="ECO:0007669"/>
    <property type="project" value="UniProtKB-UniRule"/>
</dbReference>
<dbReference type="GO" id="GO:0005524">
    <property type="term" value="F:ATP binding"/>
    <property type="evidence" value="ECO:0007669"/>
    <property type="project" value="UniProtKB-UniRule"/>
</dbReference>
<dbReference type="GO" id="GO:0042450">
    <property type="term" value="P:arginine biosynthetic process via ornithine"/>
    <property type="evidence" value="ECO:0007669"/>
    <property type="project" value="UniProtKB-UniRule"/>
</dbReference>
<dbReference type="GO" id="GO:0006526">
    <property type="term" value="P:L-arginine biosynthetic process"/>
    <property type="evidence" value="ECO:0007669"/>
    <property type="project" value="UniProtKB-UniPathway"/>
</dbReference>
<dbReference type="CDD" id="cd04250">
    <property type="entry name" value="AAK_NAGK-C"/>
    <property type="match status" value="1"/>
</dbReference>
<dbReference type="FunFam" id="3.40.1160.10:FF:000004">
    <property type="entry name" value="Acetylglutamate kinase"/>
    <property type="match status" value="1"/>
</dbReference>
<dbReference type="Gene3D" id="3.40.1160.10">
    <property type="entry name" value="Acetylglutamate kinase-like"/>
    <property type="match status" value="1"/>
</dbReference>
<dbReference type="HAMAP" id="MF_00082">
    <property type="entry name" value="ArgB"/>
    <property type="match status" value="1"/>
</dbReference>
<dbReference type="InterPro" id="IPR036393">
    <property type="entry name" value="AceGlu_kinase-like_sf"/>
</dbReference>
<dbReference type="InterPro" id="IPR004662">
    <property type="entry name" value="AcgluKinase_fam"/>
</dbReference>
<dbReference type="InterPro" id="IPR037528">
    <property type="entry name" value="ArgB"/>
</dbReference>
<dbReference type="InterPro" id="IPR001048">
    <property type="entry name" value="Asp/Glu/Uridylate_kinase"/>
</dbReference>
<dbReference type="InterPro" id="IPR001057">
    <property type="entry name" value="Glu/AcGlu_kinase"/>
</dbReference>
<dbReference type="InterPro" id="IPR041727">
    <property type="entry name" value="NAGK-C"/>
</dbReference>
<dbReference type="NCBIfam" id="TIGR00761">
    <property type="entry name" value="argB"/>
    <property type="match status" value="1"/>
</dbReference>
<dbReference type="PANTHER" id="PTHR23342">
    <property type="entry name" value="N-ACETYLGLUTAMATE SYNTHASE"/>
    <property type="match status" value="1"/>
</dbReference>
<dbReference type="PANTHER" id="PTHR23342:SF0">
    <property type="entry name" value="N-ACETYLGLUTAMATE SYNTHASE, MITOCHONDRIAL"/>
    <property type="match status" value="1"/>
</dbReference>
<dbReference type="Pfam" id="PF00696">
    <property type="entry name" value="AA_kinase"/>
    <property type="match status" value="1"/>
</dbReference>
<dbReference type="PIRSF" id="PIRSF000728">
    <property type="entry name" value="NAGK"/>
    <property type="match status" value="1"/>
</dbReference>
<dbReference type="PRINTS" id="PR00474">
    <property type="entry name" value="GLU5KINASE"/>
</dbReference>
<dbReference type="SUPFAM" id="SSF53633">
    <property type="entry name" value="Carbamate kinase-like"/>
    <property type="match status" value="1"/>
</dbReference>